<dbReference type="EMBL" id="AE014075">
    <property type="protein sequence ID" value="AAN80387.1"/>
    <property type="molecule type" value="Genomic_DNA"/>
</dbReference>
<dbReference type="RefSeq" id="WP_000543389.1">
    <property type="nucleotide sequence ID" value="NZ_CP051263.1"/>
</dbReference>
<dbReference type="SMR" id="Q8FHF9"/>
<dbReference type="STRING" id="199310.c1929"/>
<dbReference type="GeneID" id="75202795"/>
<dbReference type="KEGG" id="ecc:c1929"/>
<dbReference type="HOGENOM" id="CLU_2842804_0_0_6"/>
<dbReference type="BioCyc" id="ECOL199310:C1929-MONOMER"/>
<dbReference type="Proteomes" id="UP000001410">
    <property type="component" value="Chromosome"/>
</dbReference>
<dbReference type="GO" id="GO:0005886">
    <property type="term" value="C:plasma membrane"/>
    <property type="evidence" value="ECO:0007669"/>
    <property type="project" value="UniProtKB-SubCell"/>
</dbReference>
<dbReference type="InterPro" id="IPR031411">
    <property type="entry name" value="SafA"/>
</dbReference>
<dbReference type="Pfam" id="PF17073">
    <property type="entry name" value="SafA"/>
    <property type="match status" value="1"/>
</dbReference>
<keyword id="KW-0997">Cell inner membrane</keyword>
<keyword id="KW-1003">Cell membrane</keyword>
<keyword id="KW-0472">Membrane</keyword>
<keyword id="KW-1185">Reference proteome</keyword>
<keyword id="KW-0735">Signal-anchor</keyword>
<keyword id="KW-0346">Stress response</keyword>
<keyword id="KW-0812">Transmembrane</keyword>
<keyword id="KW-1133">Transmembrane helix</keyword>
<name>SAFA_ECOL6</name>
<proteinExistence type="inferred from homology"/>
<protein>
    <recommendedName>
        <fullName>Two-component-system connector protein SafA</fullName>
    </recommendedName>
</protein>
<comment type="function">
    <text evidence="1">Connects the signal transduction between the two-component systems EvgS/EvgA and PhoQ/PhoP, by directly interacting with PhoQ and thus activating the PhoQ/PhoP system, in response to acid stress conditions.</text>
</comment>
<comment type="subunit">
    <text evidence="1">Interacts with PhoQ.</text>
</comment>
<comment type="subcellular location">
    <subcellularLocation>
        <location evidence="1">Cell inner membrane</location>
        <topology evidence="1">Single-pass type II membrane protein</topology>
    </subcellularLocation>
</comment>
<comment type="induction">
    <text evidence="1">By acid stress, via the EvgS/EvgA system.</text>
</comment>
<comment type="similarity">
    <text evidence="3">Belongs to the SafA family.</text>
</comment>
<evidence type="ECO:0000250" key="1"/>
<evidence type="ECO:0000255" key="2"/>
<evidence type="ECO:0000305" key="3"/>
<accession>Q8FHF9</accession>
<feature type="chain" id="PRO_0000223717" description="Two-component-system connector protein SafA">
    <location>
        <begin position="1"/>
        <end position="65"/>
    </location>
</feature>
<feature type="topological domain" description="Cytoplasmic" evidence="1">
    <location>
        <begin position="1"/>
        <end position="18"/>
    </location>
</feature>
<feature type="transmembrane region" description="Helical; Signal-anchor for type II membrane protein" evidence="2">
    <location>
        <begin position="19"/>
        <end position="39"/>
    </location>
</feature>
<feature type="topological domain" description="Periplasmic" evidence="1">
    <location>
        <begin position="40"/>
        <end position="65"/>
    </location>
</feature>
<gene>
    <name type="primary">safA</name>
    <name type="ordered locus">c1929</name>
</gene>
<organism>
    <name type="scientific">Escherichia coli O6:H1 (strain CFT073 / ATCC 700928 / UPEC)</name>
    <dbReference type="NCBI Taxonomy" id="199310"/>
    <lineage>
        <taxon>Bacteria</taxon>
        <taxon>Pseudomonadati</taxon>
        <taxon>Pseudomonadota</taxon>
        <taxon>Gammaproteobacteria</taxon>
        <taxon>Enterobacterales</taxon>
        <taxon>Enterobacteriaceae</taxon>
        <taxon>Escherichia</taxon>
    </lineage>
</organism>
<sequence length="65" mass="7328">MHATTVKNKITQRDNYKEIMSVIVVVLLLTLTLIAIFSAIDQLGISEMGRIARDLTHFIINSLQD</sequence>
<reference key="1">
    <citation type="journal article" date="2002" name="Proc. Natl. Acad. Sci. U.S.A.">
        <title>Extensive mosaic structure revealed by the complete genome sequence of uropathogenic Escherichia coli.</title>
        <authorList>
            <person name="Welch R.A."/>
            <person name="Burland V."/>
            <person name="Plunkett G. III"/>
            <person name="Redford P."/>
            <person name="Roesch P."/>
            <person name="Rasko D."/>
            <person name="Buckles E.L."/>
            <person name="Liou S.-R."/>
            <person name="Boutin A."/>
            <person name="Hackett J."/>
            <person name="Stroud D."/>
            <person name="Mayhew G.F."/>
            <person name="Rose D.J."/>
            <person name="Zhou S."/>
            <person name="Schwartz D.C."/>
            <person name="Perna N.T."/>
            <person name="Mobley H.L.T."/>
            <person name="Donnenberg M.S."/>
            <person name="Blattner F.R."/>
        </authorList>
    </citation>
    <scope>NUCLEOTIDE SEQUENCE [LARGE SCALE GENOMIC DNA]</scope>
    <source>
        <strain>CFT073 / ATCC 700928 / UPEC</strain>
    </source>
</reference>